<evidence type="ECO:0000255" key="1">
    <source>
        <dbReference type="HAMAP-Rule" id="MF_01569"/>
    </source>
</evidence>
<dbReference type="EC" id="6.1.1.15" evidence="1"/>
<dbReference type="EMBL" id="AM286415">
    <property type="protein sequence ID" value="CAL13288.1"/>
    <property type="molecule type" value="Genomic_DNA"/>
</dbReference>
<dbReference type="RefSeq" id="WP_005163997.1">
    <property type="nucleotide sequence ID" value="NC_008800.1"/>
</dbReference>
<dbReference type="RefSeq" id="YP_001007432.1">
    <property type="nucleotide sequence ID" value="NC_008800.1"/>
</dbReference>
<dbReference type="SMR" id="A1JP53"/>
<dbReference type="GeneID" id="31412037"/>
<dbReference type="KEGG" id="yen:YE3258"/>
<dbReference type="PATRIC" id="fig|393305.7.peg.3466"/>
<dbReference type="eggNOG" id="COG0442">
    <property type="taxonomic scope" value="Bacteria"/>
</dbReference>
<dbReference type="HOGENOM" id="CLU_016739_0_0_6"/>
<dbReference type="OrthoDB" id="9809052at2"/>
<dbReference type="Proteomes" id="UP000000642">
    <property type="component" value="Chromosome"/>
</dbReference>
<dbReference type="GO" id="GO:0005829">
    <property type="term" value="C:cytosol"/>
    <property type="evidence" value="ECO:0007669"/>
    <property type="project" value="TreeGrafter"/>
</dbReference>
<dbReference type="GO" id="GO:0002161">
    <property type="term" value="F:aminoacyl-tRNA deacylase activity"/>
    <property type="evidence" value="ECO:0007669"/>
    <property type="project" value="InterPro"/>
</dbReference>
<dbReference type="GO" id="GO:0005524">
    <property type="term" value="F:ATP binding"/>
    <property type="evidence" value="ECO:0007669"/>
    <property type="project" value="UniProtKB-UniRule"/>
</dbReference>
<dbReference type="GO" id="GO:0004827">
    <property type="term" value="F:proline-tRNA ligase activity"/>
    <property type="evidence" value="ECO:0007669"/>
    <property type="project" value="UniProtKB-UniRule"/>
</dbReference>
<dbReference type="GO" id="GO:0006433">
    <property type="term" value="P:prolyl-tRNA aminoacylation"/>
    <property type="evidence" value="ECO:0007669"/>
    <property type="project" value="UniProtKB-UniRule"/>
</dbReference>
<dbReference type="CDD" id="cd04334">
    <property type="entry name" value="ProRS-INS"/>
    <property type="match status" value="1"/>
</dbReference>
<dbReference type="CDD" id="cd00861">
    <property type="entry name" value="ProRS_anticodon_short"/>
    <property type="match status" value="1"/>
</dbReference>
<dbReference type="CDD" id="cd00779">
    <property type="entry name" value="ProRS_core_prok"/>
    <property type="match status" value="1"/>
</dbReference>
<dbReference type="FunFam" id="3.30.930.10:FF:000012">
    <property type="entry name" value="Proline--tRNA ligase"/>
    <property type="match status" value="1"/>
</dbReference>
<dbReference type="FunFam" id="3.30.930.10:FF:000097">
    <property type="entry name" value="Proline--tRNA ligase"/>
    <property type="match status" value="1"/>
</dbReference>
<dbReference type="FunFam" id="3.40.50.800:FF:000006">
    <property type="entry name" value="Proline--tRNA ligase"/>
    <property type="match status" value="1"/>
</dbReference>
<dbReference type="FunFam" id="3.90.960.10:FF:000001">
    <property type="entry name" value="Proline--tRNA ligase"/>
    <property type="match status" value="1"/>
</dbReference>
<dbReference type="Gene3D" id="3.40.50.800">
    <property type="entry name" value="Anticodon-binding domain"/>
    <property type="match status" value="1"/>
</dbReference>
<dbReference type="Gene3D" id="3.30.930.10">
    <property type="entry name" value="Bira Bifunctional Protein, Domain 2"/>
    <property type="match status" value="2"/>
</dbReference>
<dbReference type="Gene3D" id="3.90.960.10">
    <property type="entry name" value="YbaK/aminoacyl-tRNA synthetase-associated domain"/>
    <property type="match status" value="1"/>
</dbReference>
<dbReference type="HAMAP" id="MF_01569">
    <property type="entry name" value="Pro_tRNA_synth_type1"/>
    <property type="match status" value="1"/>
</dbReference>
<dbReference type="InterPro" id="IPR002314">
    <property type="entry name" value="aa-tRNA-synt_IIb"/>
</dbReference>
<dbReference type="InterPro" id="IPR006195">
    <property type="entry name" value="aa-tRNA-synth_II"/>
</dbReference>
<dbReference type="InterPro" id="IPR045864">
    <property type="entry name" value="aa-tRNA-synth_II/BPL/LPL"/>
</dbReference>
<dbReference type="InterPro" id="IPR004154">
    <property type="entry name" value="Anticodon-bd"/>
</dbReference>
<dbReference type="InterPro" id="IPR036621">
    <property type="entry name" value="Anticodon-bd_dom_sf"/>
</dbReference>
<dbReference type="InterPro" id="IPR002316">
    <property type="entry name" value="Pro-tRNA-ligase_IIa"/>
</dbReference>
<dbReference type="InterPro" id="IPR004500">
    <property type="entry name" value="Pro-tRNA-synth_IIa_bac-type"/>
</dbReference>
<dbReference type="InterPro" id="IPR023717">
    <property type="entry name" value="Pro-tRNA-Synthase_IIa_type1"/>
</dbReference>
<dbReference type="InterPro" id="IPR050062">
    <property type="entry name" value="Pro-tRNA_synthetase"/>
</dbReference>
<dbReference type="InterPro" id="IPR044140">
    <property type="entry name" value="ProRS_anticodon_short"/>
</dbReference>
<dbReference type="InterPro" id="IPR033730">
    <property type="entry name" value="ProRS_core_prok"/>
</dbReference>
<dbReference type="InterPro" id="IPR036754">
    <property type="entry name" value="YbaK/aa-tRNA-synt-asso_dom_sf"/>
</dbReference>
<dbReference type="InterPro" id="IPR007214">
    <property type="entry name" value="YbaK/aa-tRNA-synth-assoc-dom"/>
</dbReference>
<dbReference type="NCBIfam" id="NF006625">
    <property type="entry name" value="PRK09194.1"/>
    <property type="match status" value="1"/>
</dbReference>
<dbReference type="NCBIfam" id="TIGR00409">
    <property type="entry name" value="proS_fam_II"/>
    <property type="match status" value="1"/>
</dbReference>
<dbReference type="PANTHER" id="PTHR42753">
    <property type="entry name" value="MITOCHONDRIAL RIBOSOME PROTEIN L39/PROLYL-TRNA LIGASE FAMILY MEMBER"/>
    <property type="match status" value="1"/>
</dbReference>
<dbReference type="PANTHER" id="PTHR42753:SF2">
    <property type="entry name" value="PROLINE--TRNA LIGASE"/>
    <property type="match status" value="1"/>
</dbReference>
<dbReference type="Pfam" id="PF03129">
    <property type="entry name" value="HGTP_anticodon"/>
    <property type="match status" value="1"/>
</dbReference>
<dbReference type="Pfam" id="PF00587">
    <property type="entry name" value="tRNA-synt_2b"/>
    <property type="match status" value="1"/>
</dbReference>
<dbReference type="Pfam" id="PF04073">
    <property type="entry name" value="tRNA_edit"/>
    <property type="match status" value="1"/>
</dbReference>
<dbReference type="PIRSF" id="PIRSF001535">
    <property type="entry name" value="ProRS_1"/>
    <property type="match status" value="1"/>
</dbReference>
<dbReference type="PRINTS" id="PR01046">
    <property type="entry name" value="TRNASYNTHPRO"/>
</dbReference>
<dbReference type="SUPFAM" id="SSF52954">
    <property type="entry name" value="Class II aaRS ABD-related"/>
    <property type="match status" value="1"/>
</dbReference>
<dbReference type="SUPFAM" id="SSF55681">
    <property type="entry name" value="Class II aaRS and biotin synthetases"/>
    <property type="match status" value="1"/>
</dbReference>
<dbReference type="SUPFAM" id="SSF55826">
    <property type="entry name" value="YbaK/ProRS associated domain"/>
    <property type="match status" value="1"/>
</dbReference>
<dbReference type="PROSITE" id="PS50862">
    <property type="entry name" value="AA_TRNA_LIGASE_II"/>
    <property type="match status" value="1"/>
</dbReference>
<reference key="1">
    <citation type="journal article" date="2006" name="PLoS Genet.">
        <title>The complete genome sequence and comparative genome analysis of the high pathogenicity Yersinia enterocolitica strain 8081.</title>
        <authorList>
            <person name="Thomson N.R."/>
            <person name="Howard S."/>
            <person name="Wren B.W."/>
            <person name="Holden M.T.G."/>
            <person name="Crossman L."/>
            <person name="Challis G.L."/>
            <person name="Churcher C."/>
            <person name="Mungall K."/>
            <person name="Brooks K."/>
            <person name="Chillingworth T."/>
            <person name="Feltwell T."/>
            <person name="Abdellah Z."/>
            <person name="Hauser H."/>
            <person name="Jagels K."/>
            <person name="Maddison M."/>
            <person name="Moule S."/>
            <person name="Sanders M."/>
            <person name="Whitehead S."/>
            <person name="Quail M.A."/>
            <person name="Dougan G."/>
            <person name="Parkhill J."/>
            <person name="Prentice M.B."/>
        </authorList>
    </citation>
    <scope>NUCLEOTIDE SEQUENCE [LARGE SCALE GENOMIC DNA]</scope>
    <source>
        <strain>NCTC 13174 / 8081</strain>
    </source>
</reference>
<proteinExistence type="inferred from homology"/>
<name>SYP_YERE8</name>
<gene>
    <name evidence="1" type="primary">proS</name>
    <name type="ordered locus">YE3258</name>
</gene>
<comment type="function">
    <text evidence="1">Catalyzes the attachment of proline to tRNA(Pro) in a two-step reaction: proline is first activated by ATP to form Pro-AMP and then transferred to the acceptor end of tRNA(Pro). As ProRS can inadvertently accommodate and process non-cognate amino acids such as alanine and cysteine, to avoid such errors it has two additional distinct editing activities against alanine. One activity is designated as 'pretransfer' editing and involves the tRNA(Pro)-independent hydrolysis of activated Ala-AMP. The other activity is designated 'posttransfer' editing and involves deacylation of mischarged Ala-tRNA(Pro). The misacylated Cys-tRNA(Pro) is not edited by ProRS.</text>
</comment>
<comment type="catalytic activity">
    <reaction evidence="1">
        <text>tRNA(Pro) + L-proline + ATP = L-prolyl-tRNA(Pro) + AMP + diphosphate</text>
        <dbReference type="Rhea" id="RHEA:14305"/>
        <dbReference type="Rhea" id="RHEA-COMP:9700"/>
        <dbReference type="Rhea" id="RHEA-COMP:9702"/>
        <dbReference type="ChEBI" id="CHEBI:30616"/>
        <dbReference type="ChEBI" id="CHEBI:33019"/>
        <dbReference type="ChEBI" id="CHEBI:60039"/>
        <dbReference type="ChEBI" id="CHEBI:78442"/>
        <dbReference type="ChEBI" id="CHEBI:78532"/>
        <dbReference type="ChEBI" id="CHEBI:456215"/>
        <dbReference type="EC" id="6.1.1.15"/>
    </reaction>
</comment>
<comment type="subunit">
    <text evidence="1">Homodimer.</text>
</comment>
<comment type="subcellular location">
    <subcellularLocation>
        <location evidence="1">Cytoplasm</location>
    </subcellularLocation>
</comment>
<comment type="domain">
    <text evidence="1">Consists of three domains: the N-terminal catalytic domain, the editing domain and the C-terminal anticodon-binding domain.</text>
</comment>
<comment type="similarity">
    <text evidence="1">Belongs to the class-II aminoacyl-tRNA synthetase family. ProS type 1 subfamily.</text>
</comment>
<accession>A1JP53</accession>
<feature type="chain" id="PRO_0000288390" description="Proline--tRNA ligase">
    <location>
        <begin position="1"/>
        <end position="572"/>
    </location>
</feature>
<protein>
    <recommendedName>
        <fullName evidence="1">Proline--tRNA ligase</fullName>
        <ecNumber evidence="1">6.1.1.15</ecNumber>
    </recommendedName>
    <alternativeName>
        <fullName evidence="1">Prolyl-tRNA synthetase</fullName>
        <shortName evidence="1">ProRS</shortName>
    </alternativeName>
</protein>
<sequence length="572" mass="63869">MRTSQYLLSTLKETPADAEVISHQLMLRAGMIRKLASGLYTWLPTGVRVLKKVENIVREEMNNAGAIEVSMPVVQPADLWQESGRWEQYGPELLRFVDRGERPFVLGPTHEEVITDLIRGEINSYKQLPLNFFQIQTKFRDEVRPRFGVMRAREFLMKDAYSFHTTQESLQETYDAMYAAYSKIFERMDLNFRAVLADTGSIGGSASHEFQVLADSGEDDIVFSTESDYAANIEFAEALAPSAPRAVATEDLRIIDTPNAKTIAELVEQFNLPIEKTVKTLMVHAHEESGHKLVALLVRGDHELNEIKAEKLPQVAKPLTFATEEEIRAIIGAGPGSLGPVNLPLPVVVDRSVAVMSDFGAGANIDGKHYFGINWERDLPLPQVADLRNVVEGDISPDGKGTLQIKRGIEVGHIFQLGTKYSEAMKATVQGEDGRNQVMTMGCYGIGVSRVVAAAIEQNHDERGIIWPDAIAPFQVAILPMNMHKSFRVQALAEELYATLRSHGIDVILDDRKERPGVMFADMELIGVPHNIVIGDRNLDSEEVEYKNRRAGEKQMIKTSEIIDFLLSQIKR</sequence>
<organism>
    <name type="scientific">Yersinia enterocolitica serotype O:8 / biotype 1B (strain NCTC 13174 / 8081)</name>
    <dbReference type="NCBI Taxonomy" id="393305"/>
    <lineage>
        <taxon>Bacteria</taxon>
        <taxon>Pseudomonadati</taxon>
        <taxon>Pseudomonadota</taxon>
        <taxon>Gammaproteobacteria</taxon>
        <taxon>Enterobacterales</taxon>
        <taxon>Yersiniaceae</taxon>
        <taxon>Yersinia</taxon>
    </lineage>
</organism>
<keyword id="KW-0030">Aminoacyl-tRNA synthetase</keyword>
<keyword id="KW-0067">ATP-binding</keyword>
<keyword id="KW-0963">Cytoplasm</keyword>
<keyword id="KW-0436">Ligase</keyword>
<keyword id="KW-0547">Nucleotide-binding</keyword>
<keyword id="KW-0648">Protein biosynthesis</keyword>